<accession>B5FN16</accession>
<name>YIDZ_SALDC</name>
<gene>
    <name evidence="1" type="primary">yidZ</name>
    <name type="ordered locus">SeD_A4236</name>
</gene>
<keyword id="KW-0238">DNA-binding</keyword>
<keyword id="KW-0804">Transcription</keyword>
<keyword id="KW-0805">Transcription regulation</keyword>
<comment type="function">
    <text evidence="1">Involved in anaerobic NO protection.</text>
</comment>
<comment type="similarity">
    <text evidence="2">Belongs to the LysR transcriptional regulatory family.</text>
</comment>
<protein>
    <recommendedName>
        <fullName evidence="1">HTH-type transcriptional regulator YidZ</fullName>
    </recommendedName>
</protein>
<dbReference type="EMBL" id="CP001144">
    <property type="protein sequence ID" value="ACH76375.1"/>
    <property type="molecule type" value="Genomic_DNA"/>
</dbReference>
<dbReference type="RefSeq" id="WP_000749365.1">
    <property type="nucleotide sequence ID" value="NC_011205.1"/>
</dbReference>
<dbReference type="SMR" id="B5FN16"/>
<dbReference type="KEGG" id="sed:SeD_A4236"/>
<dbReference type="HOGENOM" id="CLU_039613_39_2_6"/>
<dbReference type="Proteomes" id="UP000008322">
    <property type="component" value="Chromosome"/>
</dbReference>
<dbReference type="GO" id="GO:0003677">
    <property type="term" value="F:DNA binding"/>
    <property type="evidence" value="ECO:0007669"/>
    <property type="project" value="UniProtKB-KW"/>
</dbReference>
<dbReference type="GO" id="GO:0003700">
    <property type="term" value="F:DNA-binding transcription factor activity"/>
    <property type="evidence" value="ECO:0007669"/>
    <property type="project" value="UniProtKB-UniRule"/>
</dbReference>
<dbReference type="CDD" id="cd08417">
    <property type="entry name" value="PBP2_Nitroaromatics_like"/>
    <property type="match status" value="1"/>
</dbReference>
<dbReference type="Gene3D" id="3.40.190.10">
    <property type="entry name" value="Periplasmic binding protein-like II"/>
    <property type="match status" value="2"/>
</dbReference>
<dbReference type="Gene3D" id="1.10.10.10">
    <property type="entry name" value="Winged helix-like DNA-binding domain superfamily/Winged helix DNA-binding domain"/>
    <property type="match status" value="1"/>
</dbReference>
<dbReference type="HAMAP" id="MF_01607">
    <property type="entry name" value="HTH_type_YidZ"/>
    <property type="match status" value="1"/>
</dbReference>
<dbReference type="InterPro" id="IPR050389">
    <property type="entry name" value="LysR-type_TF"/>
</dbReference>
<dbReference type="InterPro" id="IPR005119">
    <property type="entry name" value="LysR_subst-bd"/>
</dbReference>
<dbReference type="InterPro" id="IPR000847">
    <property type="entry name" value="Tscrpt_reg_HTH_LysR"/>
</dbReference>
<dbReference type="InterPro" id="IPR023746">
    <property type="entry name" value="Tscrpt_reg_YidZ"/>
</dbReference>
<dbReference type="InterPro" id="IPR036388">
    <property type="entry name" value="WH-like_DNA-bd_sf"/>
</dbReference>
<dbReference type="InterPro" id="IPR036390">
    <property type="entry name" value="WH_DNA-bd_sf"/>
</dbReference>
<dbReference type="InterPro" id="IPR037402">
    <property type="entry name" value="YidZ_PBP2"/>
</dbReference>
<dbReference type="NCBIfam" id="NF007581">
    <property type="entry name" value="PRK10216.1"/>
    <property type="match status" value="1"/>
</dbReference>
<dbReference type="PANTHER" id="PTHR30118">
    <property type="entry name" value="HTH-TYPE TRANSCRIPTIONAL REGULATOR LEUO-RELATED"/>
    <property type="match status" value="1"/>
</dbReference>
<dbReference type="PANTHER" id="PTHR30118:SF11">
    <property type="entry name" value="HTH-TYPE TRANSCRIPTIONAL REGULATOR YIDZ"/>
    <property type="match status" value="1"/>
</dbReference>
<dbReference type="Pfam" id="PF00126">
    <property type="entry name" value="HTH_1"/>
    <property type="match status" value="1"/>
</dbReference>
<dbReference type="Pfam" id="PF03466">
    <property type="entry name" value="LysR_substrate"/>
    <property type="match status" value="1"/>
</dbReference>
<dbReference type="SUPFAM" id="SSF53850">
    <property type="entry name" value="Periplasmic binding protein-like II"/>
    <property type="match status" value="1"/>
</dbReference>
<dbReference type="SUPFAM" id="SSF46785">
    <property type="entry name" value="Winged helix' DNA-binding domain"/>
    <property type="match status" value="1"/>
</dbReference>
<dbReference type="PROSITE" id="PS50931">
    <property type="entry name" value="HTH_LYSR"/>
    <property type="match status" value="1"/>
</dbReference>
<evidence type="ECO:0000255" key="1">
    <source>
        <dbReference type="HAMAP-Rule" id="MF_01607"/>
    </source>
</evidence>
<evidence type="ECO:0000305" key="2"/>
<proteinExistence type="inferred from homology"/>
<feature type="chain" id="PRO_1000148199" description="HTH-type transcriptional regulator YidZ">
    <location>
        <begin position="1"/>
        <end position="319"/>
    </location>
</feature>
<feature type="domain" description="HTH lysR-type" evidence="1">
    <location>
        <begin position="8"/>
        <end position="65"/>
    </location>
</feature>
<feature type="DNA-binding region" description="H-T-H motif" evidence="1">
    <location>
        <begin position="25"/>
        <end position="44"/>
    </location>
</feature>
<reference key="1">
    <citation type="journal article" date="2011" name="J. Bacteriol.">
        <title>Comparative genomics of 28 Salmonella enterica isolates: evidence for CRISPR-mediated adaptive sublineage evolution.</title>
        <authorList>
            <person name="Fricke W.F."/>
            <person name="Mammel M.K."/>
            <person name="McDermott P.F."/>
            <person name="Tartera C."/>
            <person name="White D.G."/>
            <person name="Leclerc J.E."/>
            <person name="Ravel J."/>
            <person name="Cebula T.A."/>
        </authorList>
    </citation>
    <scope>NUCLEOTIDE SEQUENCE [LARGE SCALE GENOMIC DNA]</scope>
    <source>
        <strain>CT_02021853</strain>
    </source>
</reference>
<organism>
    <name type="scientific">Salmonella dublin (strain CT_02021853)</name>
    <dbReference type="NCBI Taxonomy" id="439851"/>
    <lineage>
        <taxon>Bacteria</taxon>
        <taxon>Pseudomonadati</taxon>
        <taxon>Pseudomonadota</taxon>
        <taxon>Gammaproteobacteria</taxon>
        <taxon>Enterobacterales</taxon>
        <taxon>Enterobacteriaceae</taxon>
        <taxon>Salmonella</taxon>
    </lineage>
</organism>
<sequence>MKKSLTNLDLNLLLCLQLLMQERSVTKAAKRMNVTPSAVSKSLAKLRAWFDDPLFVNTPLGLAPTPLMVSMEQSLADWMQMGNQLLDKPHHQTPRGLKFELAAESPLMMIMFNSLSQQIYQRYPQATIKVRNWDYDSLEAITRGEVDIGFTGRESHPRSRELLSLLPLAIDFEVLFSDLPWVWLREDHPALREAWDLDTFLRYPHISICWEQSDTWALDDVLQEMGRKRHIALSLPGFEQSLFMAAQPDHTLIATAPRYCQHYNQLHQLPLVARPLPFDAQQREKLMVPFTLLWHKRNSHNPKIVWLRQAINTLCRRLI</sequence>